<evidence type="ECO:0000255" key="1">
    <source>
        <dbReference type="HAMAP-Rule" id="MF_01865"/>
    </source>
</evidence>
<evidence type="ECO:0000255" key="2">
    <source>
        <dbReference type="PROSITE-ProRule" id="PRU01266"/>
    </source>
</evidence>
<dbReference type="EC" id="2.8.4.4" evidence="1"/>
<dbReference type="EMBL" id="CP000964">
    <property type="protein sequence ID" value="ACI10090.1"/>
    <property type="molecule type" value="Genomic_DNA"/>
</dbReference>
<dbReference type="SMR" id="B5XYQ3"/>
<dbReference type="KEGG" id="kpe:KPK_3699"/>
<dbReference type="HOGENOM" id="CLU_018697_0_0_6"/>
<dbReference type="Proteomes" id="UP000001734">
    <property type="component" value="Chromosome"/>
</dbReference>
<dbReference type="GO" id="GO:0005829">
    <property type="term" value="C:cytosol"/>
    <property type="evidence" value="ECO:0007669"/>
    <property type="project" value="TreeGrafter"/>
</dbReference>
<dbReference type="GO" id="GO:0051539">
    <property type="term" value="F:4 iron, 4 sulfur cluster binding"/>
    <property type="evidence" value="ECO:0007669"/>
    <property type="project" value="UniProtKB-UniRule"/>
</dbReference>
<dbReference type="GO" id="GO:0035599">
    <property type="term" value="F:aspartic acid methylthiotransferase activity"/>
    <property type="evidence" value="ECO:0007669"/>
    <property type="project" value="TreeGrafter"/>
</dbReference>
<dbReference type="GO" id="GO:0046872">
    <property type="term" value="F:metal ion binding"/>
    <property type="evidence" value="ECO:0007669"/>
    <property type="project" value="UniProtKB-KW"/>
</dbReference>
<dbReference type="GO" id="GO:0103039">
    <property type="term" value="F:protein methylthiotransferase activity"/>
    <property type="evidence" value="ECO:0007669"/>
    <property type="project" value="UniProtKB-EC"/>
</dbReference>
<dbReference type="GO" id="GO:0006400">
    <property type="term" value="P:tRNA modification"/>
    <property type="evidence" value="ECO:0007669"/>
    <property type="project" value="InterPro"/>
</dbReference>
<dbReference type="CDD" id="cd01335">
    <property type="entry name" value="Radical_SAM"/>
    <property type="match status" value="1"/>
</dbReference>
<dbReference type="FunFam" id="2.40.50.140:FF:000060">
    <property type="entry name" value="Ribosomal protein S12 methylthiotransferase RimO"/>
    <property type="match status" value="1"/>
</dbReference>
<dbReference type="FunFam" id="3.40.50.12160:FF:000002">
    <property type="entry name" value="Ribosomal protein S12 methylthiotransferase RimO"/>
    <property type="match status" value="1"/>
</dbReference>
<dbReference type="FunFam" id="3.80.30.20:FF:000001">
    <property type="entry name" value="tRNA-2-methylthio-N(6)-dimethylallyladenosine synthase 2"/>
    <property type="match status" value="1"/>
</dbReference>
<dbReference type="Gene3D" id="3.40.50.12160">
    <property type="entry name" value="Methylthiotransferase, N-terminal domain"/>
    <property type="match status" value="1"/>
</dbReference>
<dbReference type="Gene3D" id="2.40.50.140">
    <property type="entry name" value="Nucleic acid-binding proteins"/>
    <property type="match status" value="1"/>
</dbReference>
<dbReference type="Gene3D" id="3.80.30.20">
    <property type="entry name" value="tm_1862 like domain"/>
    <property type="match status" value="1"/>
</dbReference>
<dbReference type="HAMAP" id="MF_01865">
    <property type="entry name" value="MTTase_RimO"/>
    <property type="match status" value="1"/>
</dbReference>
<dbReference type="InterPro" id="IPR006638">
    <property type="entry name" value="Elp3/MiaA/NifB-like_rSAM"/>
</dbReference>
<dbReference type="InterPro" id="IPR005839">
    <property type="entry name" value="Methylthiotransferase"/>
</dbReference>
<dbReference type="InterPro" id="IPR020612">
    <property type="entry name" value="Methylthiotransferase_CS"/>
</dbReference>
<dbReference type="InterPro" id="IPR013848">
    <property type="entry name" value="Methylthiotransferase_N"/>
</dbReference>
<dbReference type="InterPro" id="IPR038135">
    <property type="entry name" value="Methylthiotransferase_N_sf"/>
</dbReference>
<dbReference type="InterPro" id="IPR012340">
    <property type="entry name" value="NA-bd_OB-fold"/>
</dbReference>
<dbReference type="InterPro" id="IPR005840">
    <property type="entry name" value="Ribosomal_uS12_MeSTrfase_RimO"/>
</dbReference>
<dbReference type="InterPro" id="IPR007197">
    <property type="entry name" value="rSAM"/>
</dbReference>
<dbReference type="InterPro" id="IPR023404">
    <property type="entry name" value="rSAM_horseshoe"/>
</dbReference>
<dbReference type="InterPro" id="IPR002792">
    <property type="entry name" value="TRAM_dom"/>
</dbReference>
<dbReference type="NCBIfam" id="TIGR01125">
    <property type="entry name" value="30S ribosomal protein S12 methylthiotransferase RimO"/>
    <property type="match status" value="1"/>
</dbReference>
<dbReference type="NCBIfam" id="TIGR00089">
    <property type="entry name" value="MiaB/RimO family radical SAM methylthiotransferase"/>
    <property type="match status" value="1"/>
</dbReference>
<dbReference type="PANTHER" id="PTHR43837">
    <property type="entry name" value="RIBOSOMAL PROTEIN S12 METHYLTHIOTRANSFERASE RIMO"/>
    <property type="match status" value="1"/>
</dbReference>
<dbReference type="PANTHER" id="PTHR43837:SF1">
    <property type="entry name" value="RIBOSOMAL PROTEIN US12 METHYLTHIOTRANSFERASE RIMO"/>
    <property type="match status" value="1"/>
</dbReference>
<dbReference type="Pfam" id="PF04055">
    <property type="entry name" value="Radical_SAM"/>
    <property type="match status" value="1"/>
</dbReference>
<dbReference type="Pfam" id="PF18693">
    <property type="entry name" value="TRAM_2"/>
    <property type="match status" value="1"/>
</dbReference>
<dbReference type="Pfam" id="PF00919">
    <property type="entry name" value="UPF0004"/>
    <property type="match status" value="1"/>
</dbReference>
<dbReference type="SFLD" id="SFLDG01082">
    <property type="entry name" value="B12-binding_domain_containing"/>
    <property type="match status" value="1"/>
</dbReference>
<dbReference type="SFLD" id="SFLDS00029">
    <property type="entry name" value="Radical_SAM"/>
    <property type="match status" value="1"/>
</dbReference>
<dbReference type="SFLD" id="SFLDF00274">
    <property type="entry name" value="ribosomal_protein_S12_methylth"/>
    <property type="match status" value="1"/>
</dbReference>
<dbReference type="SMART" id="SM00729">
    <property type="entry name" value="Elp3"/>
    <property type="match status" value="1"/>
</dbReference>
<dbReference type="SUPFAM" id="SSF102114">
    <property type="entry name" value="Radical SAM enzymes"/>
    <property type="match status" value="1"/>
</dbReference>
<dbReference type="PROSITE" id="PS51449">
    <property type="entry name" value="MTTASE_N"/>
    <property type="match status" value="1"/>
</dbReference>
<dbReference type="PROSITE" id="PS01278">
    <property type="entry name" value="MTTASE_RADICAL"/>
    <property type="match status" value="1"/>
</dbReference>
<dbReference type="PROSITE" id="PS51918">
    <property type="entry name" value="RADICAL_SAM"/>
    <property type="match status" value="1"/>
</dbReference>
<dbReference type="PROSITE" id="PS50926">
    <property type="entry name" value="TRAM"/>
    <property type="match status" value="1"/>
</dbReference>
<gene>
    <name evidence="1" type="primary">rimO</name>
    <name type="ordered locus">KPK_3699</name>
</gene>
<accession>B5XYQ3</accession>
<protein>
    <recommendedName>
        <fullName evidence="1">Ribosomal protein uS12 methylthiotransferase RimO</fullName>
        <shortName evidence="1">uS12 MTTase</shortName>
        <shortName evidence="1">uS12 methylthiotransferase</shortName>
        <ecNumber evidence="1">2.8.4.4</ecNumber>
    </recommendedName>
    <alternativeName>
        <fullName evidence="1">Ribosomal protein uS12 (aspartate-C(3))-methylthiotransferase</fullName>
    </alternativeName>
    <alternativeName>
        <fullName evidence="1">Ribosome maturation factor RimO</fullName>
    </alternativeName>
</protein>
<proteinExistence type="inferred from homology"/>
<name>RIMO_KLEP3</name>
<organism>
    <name type="scientific">Klebsiella pneumoniae (strain 342)</name>
    <dbReference type="NCBI Taxonomy" id="507522"/>
    <lineage>
        <taxon>Bacteria</taxon>
        <taxon>Pseudomonadati</taxon>
        <taxon>Pseudomonadota</taxon>
        <taxon>Gammaproteobacteria</taxon>
        <taxon>Enterobacterales</taxon>
        <taxon>Enterobacteriaceae</taxon>
        <taxon>Klebsiella/Raoultella group</taxon>
        <taxon>Klebsiella</taxon>
        <taxon>Klebsiella pneumoniae complex</taxon>
    </lineage>
</organism>
<feature type="chain" id="PRO_0000374870" description="Ribosomal protein uS12 methylthiotransferase RimO">
    <location>
        <begin position="1"/>
        <end position="441"/>
    </location>
</feature>
<feature type="domain" description="MTTase N-terminal" evidence="1">
    <location>
        <begin position="8"/>
        <end position="118"/>
    </location>
</feature>
<feature type="domain" description="Radical SAM core" evidence="2">
    <location>
        <begin position="136"/>
        <end position="373"/>
    </location>
</feature>
<feature type="domain" description="TRAM" evidence="1">
    <location>
        <begin position="376"/>
        <end position="441"/>
    </location>
</feature>
<feature type="binding site" evidence="1">
    <location>
        <position position="17"/>
    </location>
    <ligand>
        <name>[4Fe-4S] cluster</name>
        <dbReference type="ChEBI" id="CHEBI:49883"/>
        <label>1</label>
    </ligand>
</feature>
<feature type="binding site" evidence="1">
    <location>
        <position position="53"/>
    </location>
    <ligand>
        <name>[4Fe-4S] cluster</name>
        <dbReference type="ChEBI" id="CHEBI:49883"/>
        <label>1</label>
    </ligand>
</feature>
<feature type="binding site" evidence="1">
    <location>
        <position position="82"/>
    </location>
    <ligand>
        <name>[4Fe-4S] cluster</name>
        <dbReference type="ChEBI" id="CHEBI:49883"/>
        <label>1</label>
    </ligand>
</feature>
<feature type="binding site" evidence="1">
    <location>
        <position position="150"/>
    </location>
    <ligand>
        <name>[4Fe-4S] cluster</name>
        <dbReference type="ChEBI" id="CHEBI:49883"/>
        <label>2</label>
        <note>4Fe-4S-S-AdoMet</note>
    </ligand>
</feature>
<feature type="binding site" evidence="1">
    <location>
        <position position="154"/>
    </location>
    <ligand>
        <name>[4Fe-4S] cluster</name>
        <dbReference type="ChEBI" id="CHEBI:49883"/>
        <label>2</label>
        <note>4Fe-4S-S-AdoMet</note>
    </ligand>
</feature>
<feature type="binding site" evidence="1">
    <location>
        <position position="157"/>
    </location>
    <ligand>
        <name>[4Fe-4S] cluster</name>
        <dbReference type="ChEBI" id="CHEBI:49883"/>
        <label>2</label>
        <note>4Fe-4S-S-AdoMet</note>
    </ligand>
</feature>
<comment type="function">
    <text evidence="1">Catalyzes the methylthiolation of an aspartic acid residue of ribosomal protein uS12.</text>
</comment>
<comment type="catalytic activity">
    <reaction evidence="1">
        <text>L-aspartate(89)-[ribosomal protein uS12]-hydrogen + (sulfur carrier)-SH + AH2 + 2 S-adenosyl-L-methionine = 3-methylsulfanyl-L-aspartate(89)-[ribosomal protein uS12]-hydrogen + (sulfur carrier)-H + 5'-deoxyadenosine + L-methionine + A + S-adenosyl-L-homocysteine + 2 H(+)</text>
        <dbReference type="Rhea" id="RHEA:37087"/>
        <dbReference type="Rhea" id="RHEA-COMP:10460"/>
        <dbReference type="Rhea" id="RHEA-COMP:10461"/>
        <dbReference type="Rhea" id="RHEA-COMP:14737"/>
        <dbReference type="Rhea" id="RHEA-COMP:14739"/>
        <dbReference type="ChEBI" id="CHEBI:13193"/>
        <dbReference type="ChEBI" id="CHEBI:15378"/>
        <dbReference type="ChEBI" id="CHEBI:17319"/>
        <dbReference type="ChEBI" id="CHEBI:17499"/>
        <dbReference type="ChEBI" id="CHEBI:29917"/>
        <dbReference type="ChEBI" id="CHEBI:29961"/>
        <dbReference type="ChEBI" id="CHEBI:57844"/>
        <dbReference type="ChEBI" id="CHEBI:57856"/>
        <dbReference type="ChEBI" id="CHEBI:59789"/>
        <dbReference type="ChEBI" id="CHEBI:64428"/>
        <dbReference type="ChEBI" id="CHEBI:73599"/>
        <dbReference type="EC" id="2.8.4.4"/>
    </reaction>
</comment>
<comment type="cofactor">
    <cofactor evidence="1">
        <name>[4Fe-4S] cluster</name>
        <dbReference type="ChEBI" id="CHEBI:49883"/>
    </cofactor>
    <text evidence="1">Binds 2 [4Fe-4S] clusters. One cluster is coordinated with 3 cysteines and an exchangeable S-adenosyl-L-methionine.</text>
</comment>
<comment type="subcellular location">
    <subcellularLocation>
        <location evidence="1">Cytoplasm</location>
    </subcellularLocation>
</comment>
<comment type="similarity">
    <text evidence="1">Belongs to the methylthiotransferase family. RimO subfamily.</text>
</comment>
<keyword id="KW-0004">4Fe-4S</keyword>
<keyword id="KW-0963">Cytoplasm</keyword>
<keyword id="KW-0408">Iron</keyword>
<keyword id="KW-0411">Iron-sulfur</keyword>
<keyword id="KW-0479">Metal-binding</keyword>
<keyword id="KW-0949">S-adenosyl-L-methionine</keyword>
<keyword id="KW-0808">Transferase</keyword>
<reference key="1">
    <citation type="journal article" date="2008" name="PLoS Genet.">
        <title>Complete genome sequence of the N2-fixing broad host range endophyte Klebsiella pneumoniae 342 and virulence predictions verified in mice.</title>
        <authorList>
            <person name="Fouts D.E."/>
            <person name="Tyler H.L."/>
            <person name="DeBoy R.T."/>
            <person name="Daugherty S."/>
            <person name="Ren Q."/>
            <person name="Badger J.H."/>
            <person name="Durkin A.S."/>
            <person name="Huot H."/>
            <person name="Shrivastava S."/>
            <person name="Kothari S."/>
            <person name="Dodson R.J."/>
            <person name="Mohamoud Y."/>
            <person name="Khouri H."/>
            <person name="Roesch L.F.W."/>
            <person name="Krogfelt K.A."/>
            <person name="Struve C."/>
            <person name="Triplett E.W."/>
            <person name="Methe B.A."/>
        </authorList>
    </citation>
    <scope>NUCLEOTIDE SEQUENCE [LARGE SCALE GENOMIC DNA]</scope>
    <source>
        <strain>342</strain>
    </source>
</reference>
<sequence length="441" mass="49554">MSNVTHQPKIGFVSLGCPKNLVDSERILTELRTEGYDVVPTYDNADMVIVNTCGFIDSAVQESLEAIGEALKENGKVIVTGCLGAKEDQIREVHPKVLEITGPHSYEQVLEHVHHYSPKPKHNPFLSLVPEQGVKLTPRHYAYLKISEGCNHRCTFCIIPSMRGDLVSRPIGEVLAEAKRLADAGVKELLVISQDTSAYGVDVKHRTGFHNGMPVKTSMVSLCEELAKLGIWVRLHYVYPYPHVDDVIPLMAEGKILPYLDIPLQHASPRILKLMKRPGSADRQLARIKQWREICPDLTLRSTFIVGFPGETEEDFQMLLDFLKEARLDRVGCFKYSPVEGATANELADQVPEEVKEERWNRFMQLQQQISAERLQEKVGREILVLVDEVDEEGAIGRSMADAPEIDGAVYLNGETRVKPGDVVRVKVEHADEYDLWGTRV</sequence>